<proteinExistence type="inferred from homology"/>
<feature type="chain" id="PRO_0000310782" description="Uncharacterized oxidoreductase pbr1">
    <location>
        <begin position="1"/>
        <end position="376"/>
    </location>
</feature>
<feature type="topological domain" description="Lumenal" evidence="6">
    <location>
        <begin position="1"/>
        <end position="280"/>
    </location>
</feature>
<feature type="transmembrane region" description="Helical" evidence="4">
    <location>
        <begin position="281"/>
        <end position="301"/>
    </location>
</feature>
<feature type="topological domain" description="Cytoplasmic" evidence="6">
    <location>
        <begin position="302"/>
        <end position="376"/>
    </location>
</feature>
<feature type="active site" description="Lowers pKa of active site Tyr" evidence="2">
    <location>
        <position position="233"/>
    </location>
</feature>
<feature type="binding site" evidence="1">
    <location>
        <position position="66"/>
    </location>
    <ligand>
        <name>NADP(+)</name>
        <dbReference type="ChEBI" id="CHEBI:58349"/>
    </ligand>
</feature>
<feature type="binding site" evidence="1">
    <location>
        <position position="115"/>
    </location>
    <ligand>
        <name>NADP(+)</name>
        <dbReference type="ChEBI" id="CHEBI:58349"/>
    </ligand>
</feature>
<feature type="binding site" evidence="1">
    <location>
        <position position="178"/>
    </location>
    <ligand>
        <name>NADP(+)</name>
        <dbReference type="ChEBI" id="CHEBI:58349"/>
    </ligand>
</feature>
<feature type="binding site" evidence="2">
    <location>
        <position position="233"/>
    </location>
    <ligand>
        <name>NADP(+)</name>
        <dbReference type="ChEBI" id="CHEBI:58349"/>
    </ligand>
</feature>
<feature type="binding site" evidence="2">
    <location>
        <position position="270"/>
    </location>
    <ligand>
        <name>NADP(+)</name>
        <dbReference type="ChEBI" id="CHEBI:58349"/>
    </ligand>
</feature>
<feature type="binding site" evidence="1">
    <location>
        <position position="272"/>
    </location>
    <ligand>
        <name>NADP(+)</name>
        <dbReference type="ChEBI" id="CHEBI:58349"/>
    </ligand>
</feature>
<keyword id="KW-0963">Cytoplasm</keyword>
<keyword id="KW-0256">Endoplasmic reticulum</keyword>
<keyword id="KW-0472">Membrane</keyword>
<keyword id="KW-0521">NADP</keyword>
<keyword id="KW-0560">Oxidoreductase</keyword>
<keyword id="KW-1185">Reference proteome</keyword>
<keyword id="KW-0812">Transmembrane</keyword>
<keyword id="KW-1133">Transmembrane helix</keyword>
<gene>
    <name type="primary">pbr1</name>
    <name type="synonym">ceo3</name>
    <name evidence="7" type="ORF">SPAC19A8.06</name>
</gene>
<name>PBR1_SCHPO</name>
<sequence length="376" mass="42933">MPIPIIAHIAQFKYEHLITHWAQYTKAAIAVSTIAAFKFWTSGRTTTWERKMNGMVVMVTGGSSGIGQVVVEKLASLGAQVVILLRTEPDQFTVDYIMDLRKRTKNQLIYTEVCDLSSMLSVRKFATKWIDCTPIRRLDMIVLCSGVLLPPFMDRQTTEEGVELQWATNFLGPYQLLRILRPVIYGQPGHREVRIVAATCSSYILGNIDFNDLDLSNHPYPRKSPWKVVGNAKLALMTYLYDFQKKAEAHERPDKMPCNLHTIMANPGVVRTPGFRRVVSFGKVWGLFLYLLLWPFWWLLLKGTIHGAQSFFHAICSPEFASITQPVLVNECSIVEYSRKEITDPEFAEKLIKAADAQIDEVEKQYKKKKIKKSKK</sequence>
<evidence type="ECO:0000250" key="1">
    <source>
        <dbReference type="UniProtKB" id="L0E2Z4"/>
    </source>
</evidence>
<evidence type="ECO:0000250" key="2">
    <source>
        <dbReference type="UniProtKB" id="O93868"/>
    </source>
</evidence>
<evidence type="ECO:0000250" key="3">
    <source>
        <dbReference type="UniProtKB" id="P53878"/>
    </source>
</evidence>
<evidence type="ECO:0000255" key="4"/>
<evidence type="ECO:0000269" key="5">
    <source>
    </source>
</evidence>
<evidence type="ECO:0000305" key="6"/>
<evidence type="ECO:0000312" key="7">
    <source>
        <dbReference type="PomBase" id="SPAC19A8.06"/>
    </source>
</evidence>
<comment type="function">
    <text evidence="3">May be involved in lipid metabolism.</text>
</comment>
<comment type="subcellular location">
    <subcellularLocation>
        <location evidence="5">Cytoplasm</location>
    </subcellularLocation>
    <subcellularLocation>
        <location evidence="3">Endoplasmic reticulum membrane</location>
        <topology evidence="4">Single-pass membrane protein</topology>
    </subcellularLocation>
</comment>
<comment type="similarity">
    <text evidence="6">Belongs to the short-chain dehydrogenases/reductases (SDR) family.</text>
</comment>
<accession>O13822</accession>
<accession>A0AAN2H7S4</accession>
<reference key="1">
    <citation type="journal article" date="2002" name="Nature">
        <title>The genome sequence of Schizosaccharomyces pombe.</title>
        <authorList>
            <person name="Wood V."/>
            <person name="Gwilliam R."/>
            <person name="Rajandream M.A."/>
            <person name="Lyne M.H."/>
            <person name="Lyne R."/>
            <person name="Stewart A."/>
            <person name="Sgouros J.G."/>
            <person name="Peat N."/>
            <person name="Hayles J."/>
            <person name="Baker S.G."/>
            <person name="Basham D."/>
            <person name="Bowman S."/>
            <person name="Brooks K."/>
            <person name="Brown D."/>
            <person name="Brown S."/>
            <person name="Chillingworth T."/>
            <person name="Churcher C.M."/>
            <person name="Collins M."/>
            <person name="Connor R."/>
            <person name="Cronin A."/>
            <person name="Davis P."/>
            <person name="Feltwell T."/>
            <person name="Fraser A."/>
            <person name="Gentles S."/>
            <person name="Goble A."/>
            <person name="Hamlin N."/>
            <person name="Harris D.E."/>
            <person name="Hidalgo J."/>
            <person name="Hodgson G."/>
            <person name="Holroyd S."/>
            <person name="Hornsby T."/>
            <person name="Howarth S."/>
            <person name="Huckle E.J."/>
            <person name="Hunt S."/>
            <person name="Jagels K."/>
            <person name="James K.D."/>
            <person name="Jones L."/>
            <person name="Jones M."/>
            <person name="Leather S."/>
            <person name="McDonald S."/>
            <person name="McLean J."/>
            <person name="Mooney P."/>
            <person name="Moule S."/>
            <person name="Mungall K.L."/>
            <person name="Murphy L.D."/>
            <person name="Niblett D."/>
            <person name="Odell C."/>
            <person name="Oliver K."/>
            <person name="O'Neil S."/>
            <person name="Pearson D."/>
            <person name="Quail M.A."/>
            <person name="Rabbinowitsch E."/>
            <person name="Rutherford K.M."/>
            <person name="Rutter S."/>
            <person name="Saunders D."/>
            <person name="Seeger K."/>
            <person name="Sharp S."/>
            <person name="Skelton J."/>
            <person name="Simmonds M.N."/>
            <person name="Squares R."/>
            <person name="Squares S."/>
            <person name="Stevens K."/>
            <person name="Taylor K."/>
            <person name="Taylor R.G."/>
            <person name="Tivey A."/>
            <person name="Walsh S.V."/>
            <person name="Warren T."/>
            <person name="Whitehead S."/>
            <person name="Woodward J.R."/>
            <person name="Volckaert G."/>
            <person name="Aert R."/>
            <person name="Robben J."/>
            <person name="Grymonprez B."/>
            <person name="Weltjens I."/>
            <person name="Vanstreels E."/>
            <person name="Rieger M."/>
            <person name="Schaefer M."/>
            <person name="Mueller-Auer S."/>
            <person name="Gabel C."/>
            <person name="Fuchs M."/>
            <person name="Duesterhoeft A."/>
            <person name="Fritzc C."/>
            <person name="Holzer E."/>
            <person name="Moestl D."/>
            <person name="Hilbert H."/>
            <person name="Borzym K."/>
            <person name="Langer I."/>
            <person name="Beck A."/>
            <person name="Lehrach H."/>
            <person name="Reinhardt R."/>
            <person name="Pohl T.M."/>
            <person name="Eger P."/>
            <person name="Zimmermann W."/>
            <person name="Wedler H."/>
            <person name="Wambutt R."/>
            <person name="Purnelle B."/>
            <person name="Goffeau A."/>
            <person name="Cadieu E."/>
            <person name="Dreano S."/>
            <person name="Gloux S."/>
            <person name="Lelaure V."/>
            <person name="Mottier S."/>
            <person name="Galibert F."/>
            <person name="Aves S.J."/>
            <person name="Xiang Z."/>
            <person name="Hunt C."/>
            <person name="Moore K."/>
            <person name="Hurst S.M."/>
            <person name="Lucas M."/>
            <person name="Rochet M."/>
            <person name="Gaillardin C."/>
            <person name="Tallada V.A."/>
            <person name="Garzon A."/>
            <person name="Thode G."/>
            <person name="Daga R.R."/>
            <person name="Cruzado L."/>
            <person name="Jimenez J."/>
            <person name="Sanchez M."/>
            <person name="del Rey F."/>
            <person name="Benito J."/>
            <person name="Dominguez A."/>
            <person name="Revuelta J.L."/>
            <person name="Moreno S."/>
            <person name="Armstrong J."/>
            <person name="Forsburg S.L."/>
            <person name="Cerutti L."/>
            <person name="Lowe T."/>
            <person name="McCombie W.R."/>
            <person name="Paulsen I."/>
            <person name="Potashkin J."/>
            <person name="Shpakovski G.V."/>
            <person name="Ussery D."/>
            <person name="Barrell B.G."/>
            <person name="Nurse P."/>
        </authorList>
    </citation>
    <scope>NUCLEOTIDE SEQUENCE [LARGE SCALE GENOMIC DNA]</scope>
    <source>
        <strain>972 / ATCC 24843</strain>
    </source>
</reference>
<reference key="2">
    <citation type="journal article" date="2006" name="Nat. Biotechnol.">
        <title>ORFeome cloning and global analysis of protein localization in the fission yeast Schizosaccharomyces pombe.</title>
        <authorList>
            <person name="Matsuyama A."/>
            <person name="Arai R."/>
            <person name="Yashiroda Y."/>
            <person name="Shirai A."/>
            <person name="Kamata A."/>
            <person name="Sekido S."/>
            <person name="Kobayashi Y."/>
            <person name="Hashimoto A."/>
            <person name="Hamamoto M."/>
            <person name="Hiraoka Y."/>
            <person name="Horinouchi S."/>
            <person name="Yoshida M."/>
        </authorList>
    </citation>
    <scope>SUBCELLULAR LOCATION [LARGE SCALE ANALYSIS]</scope>
</reference>
<protein>
    <recommendedName>
        <fullName>Uncharacterized oxidoreductase pbr1</fullName>
        <ecNumber>1.-.-.-</ecNumber>
    </recommendedName>
</protein>
<dbReference type="EC" id="1.-.-.-"/>
<dbReference type="EMBL" id="CU329670">
    <property type="protein sequence ID" value="CAK9838022.1"/>
    <property type="molecule type" value="Genomic_DNA"/>
</dbReference>
<dbReference type="PIR" id="T37955">
    <property type="entry name" value="T37955"/>
</dbReference>
<dbReference type="RefSeq" id="NP_593786.1">
    <property type="nucleotide sequence ID" value="NM_001019215.2"/>
</dbReference>
<dbReference type="SMR" id="O13822"/>
<dbReference type="FunCoup" id="O13822">
    <property type="interactions" value="6"/>
</dbReference>
<dbReference type="STRING" id="284812.O13822"/>
<dbReference type="SwissPalm" id="O13822"/>
<dbReference type="PaxDb" id="4896-SPAC19A8.06.1"/>
<dbReference type="EnsemblFungi" id="SPAC19A8.06.1">
    <property type="protein sequence ID" value="SPAC19A8.06.1:pep"/>
    <property type="gene ID" value="SPAC19A8.06"/>
</dbReference>
<dbReference type="GeneID" id="2542391"/>
<dbReference type="KEGG" id="spo:2542391"/>
<dbReference type="PomBase" id="SPAC19A8.06">
    <property type="gene designation" value="pbr1"/>
</dbReference>
<dbReference type="VEuPathDB" id="FungiDB:SPAC19A8.06"/>
<dbReference type="eggNOG" id="KOG1208">
    <property type="taxonomic scope" value="Eukaryota"/>
</dbReference>
<dbReference type="HOGENOM" id="CLU_010194_44_1_1"/>
<dbReference type="InParanoid" id="O13822"/>
<dbReference type="OMA" id="NIEDPLW"/>
<dbReference type="PhylomeDB" id="O13822"/>
<dbReference type="Reactome" id="R-SPO-5365859">
    <property type="pathway name" value="RA biosynthesis pathway"/>
</dbReference>
<dbReference type="PRO" id="PR:O13822"/>
<dbReference type="Proteomes" id="UP000002485">
    <property type="component" value="Chromosome I"/>
</dbReference>
<dbReference type="GO" id="GO:0005737">
    <property type="term" value="C:cytoplasm"/>
    <property type="evidence" value="ECO:0007005"/>
    <property type="project" value="PomBase"/>
</dbReference>
<dbReference type="GO" id="GO:0005783">
    <property type="term" value="C:endoplasmic reticulum"/>
    <property type="evidence" value="ECO:0000266"/>
    <property type="project" value="PomBase"/>
</dbReference>
<dbReference type="GO" id="GO:0005789">
    <property type="term" value="C:endoplasmic reticulum membrane"/>
    <property type="evidence" value="ECO:0007669"/>
    <property type="project" value="UniProtKB-SubCell"/>
</dbReference>
<dbReference type="GO" id="GO:0016020">
    <property type="term" value="C:membrane"/>
    <property type="evidence" value="ECO:0007669"/>
    <property type="project" value="UniProtKB-KW"/>
</dbReference>
<dbReference type="GO" id="GO:0031965">
    <property type="term" value="C:nuclear membrane"/>
    <property type="evidence" value="ECO:0000266"/>
    <property type="project" value="PomBase"/>
</dbReference>
<dbReference type="GO" id="GO:0016491">
    <property type="term" value="F:oxidoreductase activity"/>
    <property type="evidence" value="ECO:0007669"/>
    <property type="project" value="UniProtKB-KW"/>
</dbReference>
<dbReference type="CDD" id="cd05327">
    <property type="entry name" value="retinol-DH_like_SDR_c_like"/>
    <property type="match status" value="1"/>
</dbReference>
<dbReference type="FunFam" id="3.40.50.720:FF:001870">
    <property type="entry name" value="Uncharacterized oxidoreductase C19A8.06"/>
    <property type="match status" value="1"/>
</dbReference>
<dbReference type="Gene3D" id="3.40.50.720">
    <property type="entry name" value="NAD(P)-binding Rossmann-like Domain"/>
    <property type="match status" value="1"/>
</dbReference>
<dbReference type="InterPro" id="IPR036291">
    <property type="entry name" value="NAD(P)-bd_dom_sf"/>
</dbReference>
<dbReference type="InterPro" id="IPR002347">
    <property type="entry name" value="SDR_fam"/>
</dbReference>
<dbReference type="PANTHER" id="PTHR24320">
    <property type="entry name" value="RETINOL DEHYDROGENASE"/>
    <property type="match status" value="1"/>
</dbReference>
<dbReference type="PANTHER" id="PTHR24320:SF285">
    <property type="entry name" value="RETINOL DEHYDROGENASE 14"/>
    <property type="match status" value="1"/>
</dbReference>
<dbReference type="Pfam" id="PF00106">
    <property type="entry name" value="adh_short"/>
    <property type="match status" value="1"/>
</dbReference>
<dbReference type="SUPFAM" id="SSF51735">
    <property type="entry name" value="NAD(P)-binding Rossmann-fold domains"/>
    <property type="match status" value="1"/>
</dbReference>
<organism>
    <name type="scientific">Schizosaccharomyces pombe (strain 972 / ATCC 24843)</name>
    <name type="common">Fission yeast</name>
    <dbReference type="NCBI Taxonomy" id="284812"/>
    <lineage>
        <taxon>Eukaryota</taxon>
        <taxon>Fungi</taxon>
        <taxon>Dikarya</taxon>
        <taxon>Ascomycota</taxon>
        <taxon>Taphrinomycotina</taxon>
        <taxon>Schizosaccharomycetes</taxon>
        <taxon>Schizosaccharomycetales</taxon>
        <taxon>Schizosaccharomycetaceae</taxon>
        <taxon>Schizosaccharomyces</taxon>
    </lineage>
</organism>